<dbReference type="EC" id="3.5.4.19" evidence="1"/>
<dbReference type="EMBL" id="CP000159">
    <property type="protein sequence ID" value="ABC43607.1"/>
    <property type="molecule type" value="Genomic_DNA"/>
</dbReference>
<dbReference type="RefSeq" id="WP_011403778.1">
    <property type="nucleotide sequence ID" value="NC_007677.1"/>
</dbReference>
<dbReference type="RefSeq" id="YP_445150.1">
    <property type="nucleotide sequence ID" value="NC_007677.1"/>
</dbReference>
<dbReference type="SMR" id="Q2S3T1"/>
<dbReference type="STRING" id="309807.SRU_1018"/>
<dbReference type="EnsemblBacteria" id="ABC43607">
    <property type="protein sequence ID" value="ABC43607"/>
    <property type="gene ID" value="SRU_1018"/>
</dbReference>
<dbReference type="GeneID" id="83727946"/>
<dbReference type="KEGG" id="sru:SRU_1018"/>
<dbReference type="PATRIC" id="fig|309807.25.peg.1055"/>
<dbReference type="eggNOG" id="COG0139">
    <property type="taxonomic scope" value="Bacteria"/>
</dbReference>
<dbReference type="HOGENOM" id="CLU_048577_5_0_10"/>
<dbReference type="OrthoDB" id="9795769at2"/>
<dbReference type="UniPathway" id="UPA00031">
    <property type="reaction ID" value="UER00008"/>
</dbReference>
<dbReference type="Proteomes" id="UP000008674">
    <property type="component" value="Chromosome"/>
</dbReference>
<dbReference type="GO" id="GO:0005737">
    <property type="term" value="C:cytoplasm"/>
    <property type="evidence" value="ECO:0007669"/>
    <property type="project" value="UniProtKB-SubCell"/>
</dbReference>
<dbReference type="GO" id="GO:0000287">
    <property type="term" value="F:magnesium ion binding"/>
    <property type="evidence" value="ECO:0007669"/>
    <property type="project" value="UniProtKB-UniRule"/>
</dbReference>
<dbReference type="GO" id="GO:0004635">
    <property type="term" value="F:phosphoribosyl-AMP cyclohydrolase activity"/>
    <property type="evidence" value="ECO:0007669"/>
    <property type="project" value="UniProtKB-UniRule"/>
</dbReference>
<dbReference type="GO" id="GO:0008270">
    <property type="term" value="F:zinc ion binding"/>
    <property type="evidence" value="ECO:0007669"/>
    <property type="project" value="UniProtKB-UniRule"/>
</dbReference>
<dbReference type="GO" id="GO:0000105">
    <property type="term" value="P:L-histidine biosynthetic process"/>
    <property type="evidence" value="ECO:0007669"/>
    <property type="project" value="UniProtKB-UniRule"/>
</dbReference>
<dbReference type="FunFam" id="3.10.20.810:FF:000001">
    <property type="entry name" value="Histidine biosynthesis bifunctional protein HisIE"/>
    <property type="match status" value="1"/>
</dbReference>
<dbReference type="Gene3D" id="3.10.20.810">
    <property type="entry name" value="Phosphoribosyl-AMP cyclohydrolase"/>
    <property type="match status" value="1"/>
</dbReference>
<dbReference type="HAMAP" id="MF_01021">
    <property type="entry name" value="HisI"/>
    <property type="match status" value="1"/>
</dbReference>
<dbReference type="InterPro" id="IPR026660">
    <property type="entry name" value="PRA-CH"/>
</dbReference>
<dbReference type="InterPro" id="IPR002496">
    <property type="entry name" value="PRib_AMP_CycHydrolase_dom"/>
</dbReference>
<dbReference type="InterPro" id="IPR038019">
    <property type="entry name" value="PRib_AMP_CycHydrolase_sf"/>
</dbReference>
<dbReference type="NCBIfam" id="NF000768">
    <property type="entry name" value="PRK00051.1"/>
    <property type="match status" value="1"/>
</dbReference>
<dbReference type="PANTHER" id="PTHR42945">
    <property type="entry name" value="HISTIDINE BIOSYNTHESIS BIFUNCTIONAL PROTEIN"/>
    <property type="match status" value="1"/>
</dbReference>
<dbReference type="PANTHER" id="PTHR42945:SF1">
    <property type="entry name" value="HISTIDINE BIOSYNTHESIS BIFUNCTIONAL PROTEIN HIS7"/>
    <property type="match status" value="1"/>
</dbReference>
<dbReference type="Pfam" id="PF01502">
    <property type="entry name" value="PRA-CH"/>
    <property type="match status" value="1"/>
</dbReference>
<dbReference type="SUPFAM" id="SSF141734">
    <property type="entry name" value="HisI-like"/>
    <property type="match status" value="1"/>
</dbReference>
<evidence type="ECO:0000255" key="1">
    <source>
        <dbReference type="HAMAP-Rule" id="MF_01021"/>
    </source>
</evidence>
<keyword id="KW-0028">Amino-acid biosynthesis</keyword>
<keyword id="KW-0963">Cytoplasm</keyword>
<keyword id="KW-0368">Histidine biosynthesis</keyword>
<keyword id="KW-0378">Hydrolase</keyword>
<keyword id="KW-0460">Magnesium</keyword>
<keyword id="KW-0479">Metal-binding</keyword>
<keyword id="KW-1185">Reference proteome</keyword>
<keyword id="KW-0862">Zinc</keyword>
<accession>Q2S3T1</accession>
<name>HIS3_SALRD</name>
<feature type="chain" id="PRO_1000063434" description="Phosphoribosyl-AMP cyclohydrolase">
    <location>
        <begin position="1"/>
        <end position="127"/>
    </location>
</feature>
<feature type="binding site" evidence="1">
    <location>
        <position position="78"/>
    </location>
    <ligand>
        <name>Mg(2+)</name>
        <dbReference type="ChEBI" id="CHEBI:18420"/>
    </ligand>
</feature>
<feature type="binding site" evidence="1">
    <location>
        <position position="79"/>
    </location>
    <ligand>
        <name>Zn(2+)</name>
        <dbReference type="ChEBI" id="CHEBI:29105"/>
        <note>ligand shared between dimeric partners</note>
    </ligand>
</feature>
<feature type="binding site" evidence="1">
    <location>
        <position position="80"/>
    </location>
    <ligand>
        <name>Mg(2+)</name>
        <dbReference type="ChEBI" id="CHEBI:18420"/>
    </ligand>
</feature>
<feature type="binding site" evidence="1">
    <location>
        <position position="82"/>
    </location>
    <ligand>
        <name>Mg(2+)</name>
        <dbReference type="ChEBI" id="CHEBI:18420"/>
    </ligand>
</feature>
<feature type="binding site" evidence="1">
    <location>
        <position position="95"/>
    </location>
    <ligand>
        <name>Zn(2+)</name>
        <dbReference type="ChEBI" id="CHEBI:29105"/>
        <note>ligand shared between dimeric partners</note>
    </ligand>
</feature>
<feature type="binding site" evidence="1">
    <location>
        <position position="102"/>
    </location>
    <ligand>
        <name>Zn(2+)</name>
        <dbReference type="ChEBI" id="CHEBI:29105"/>
        <note>ligand shared between dimeric partners</note>
    </ligand>
</feature>
<reference key="1">
    <citation type="journal article" date="2005" name="Proc. Natl. Acad. Sci. U.S.A.">
        <title>The genome of Salinibacter ruber: convergence and gene exchange among hyperhalophilic bacteria and archaea.</title>
        <authorList>
            <person name="Mongodin E.F."/>
            <person name="Nelson K.E."/>
            <person name="Daugherty S."/>
            <person name="DeBoy R.T."/>
            <person name="Wister J."/>
            <person name="Khouri H."/>
            <person name="Weidman J."/>
            <person name="Walsh D.A."/>
            <person name="Papke R.T."/>
            <person name="Sanchez Perez G."/>
            <person name="Sharma A.K."/>
            <person name="Nesbo C.L."/>
            <person name="MacLeod D."/>
            <person name="Bapteste E."/>
            <person name="Doolittle W.F."/>
            <person name="Charlebois R.L."/>
            <person name="Legault B."/>
            <person name="Rodriguez-Valera F."/>
        </authorList>
    </citation>
    <scope>NUCLEOTIDE SEQUENCE [LARGE SCALE GENOMIC DNA]</scope>
    <source>
        <strain>DSM 13855 / CECT 5946 / M31</strain>
    </source>
</reference>
<gene>
    <name evidence="1" type="primary">hisI</name>
    <name type="ordered locus">SRU_1018</name>
</gene>
<protein>
    <recommendedName>
        <fullName evidence="1">Phosphoribosyl-AMP cyclohydrolase</fullName>
        <shortName evidence="1">PRA-CH</shortName>
        <ecNumber evidence="1">3.5.4.19</ecNumber>
    </recommendedName>
</protein>
<organism>
    <name type="scientific">Salinibacter ruber (strain DSM 13855 / M31)</name>
    <dbReference type="NCBI Taxonomy" id="309807"/>
    <lineage>
        <taxon>Bacteria</taxon>
        <taxon>Pseudomonadati</taxon>
        <taxon>Rhodothermota</taxon>
        <taxon>Rhodothermia</taxon>
        <taxon>Rhodothermales</taxon>
        <taxon>Salinibacteraceae</taxon>
        <taxon>Salinibacter</taxon>
    </lineage>
</organism>
<proteinExistence type="inferred from homology"/>
<sequence>MSDPLLDAADFTDDGLIPAIVQDAETDQVLMMAYMTAETLQETLDTGRMVYWSRSRQERWVKGQTSGHTQTVEEARLDCDGDTLLFRVHQEGGACHTGFRSCFHRRAADDGWTTDGEKVFDPDAVYE</sequence>
<comment type="function">
    <text evidence="1">Catalyzes the hydrolysis of the adenine ring of phosphoribosyl-AMP.</text>
</comment>
<comment type="catalytic activity">
    <reaction evidence="1">
        <text>1-(5-phospho-beta-D-ribosyl)-5'-AMP + H2O = 1-(5-phospho-beta-D-ribosyl)-5-[(5-phospho-beta-D-ribosylamino)methylideneamino]imidazole-4-carboxamide</text>
        <dbReference type="Rhea" id="RHEA:20049"/>
        <dbReference type="ChEBI" id="CHEBI:15377"/>
        <dbReference type="ChEBI" id="CHEBI:58435"/>
        <dbReference type="ChEBI" id="CHEBI:59457"/>
        <dbReference type="EC" id="3.5.4.19"/>
    </reaction>
</comment>
<comment type="cofactor">
    <cofactor evidence="1">
        <name>Mg(2+)</name>
        <dbReference type="ChEBI" id="CHEBI:18420"/>
    </cofactor>
    <text evidence="1">Binds 1 Mg(2+) ion per subunit.</text>
</comment>
<comment type="cofactor">
    <cofactor evidence="1">
        <name>Zn(2+)</name>
        <dbReference type="ChEBI" id="CHEBI:29105"/>
    </cofactor>
    <text evidence="1">Binds 1 zinc ion per subunit.</text>
</comment>
<comment type="pathway">
    <text evidence="1">Amino-acid biosynthesis; L-histidine biosynthesis; L-histidine from 5-phospho-alpha-D-ribose 1-diphosphate: step 3/9.</text>
</comment>
<comment type="subunit">
    <text evidence="1">Homodimer.</text>
</comment>
<comment type="subcellular location">
    <subcellularLocation>
        <location evidence="1">Cytoplasm</location>
    </subcellularLocation>
</comment>
<comment type="similarity">
    <text evidence="1">Belongs to the PRA-CH family.</text>
</comment>